<keyword id="KW-0030">Aminoacyl-tRNA synthetase</keyword>
<keyword id="KW-0067">ATP-binding</keyword>
<keyword id="KW-0963">Cytoplasm</keyword>
<keyword id="KW-0436">Ligase</keyword>
<keyword id="KW-0547">Nucleotide-binding</keyword>
<keyword id="KW-0648">Protein biosynthesis</keyword>
<comment type="function">
    <text evidence="1">Catalyzes the attachment of proline to tRNA(Pro) in a two-step reaction: proline is first activated by ATP to form Pro-AMP and then transferred to the acceptor end of tRNA(Pro). As ProRS can inadvertently accommodate and process non-cognate amino acids such as alanine and cysteine, to avoid such errors it has two additional distinct editing activities against alanine. One activity is designated as 'pretransfer' editing and involves the tRNA(Pro)-independent hydrolysis of activated Ala-AMP. The other activity is designated 'posttransfer' editing and involves deacylation of mischarged Ala-tRNA(Pro). The misacylated Cys-tRNA(Pro) is not edited by ProRS.</text>
</comment>
<comment type="catalytic activity">
    <reaction evidence="1">
        <text>tRNA(Pro) + L-proline + ATP = L-prolyl-tRNA(Pro) + AMP + diphosphate</text>
        <dbReference type="Rhea" id="RHEA:14305"/>
        <dbReference type="Rhea" id="RHEA-COMP:9700"/>
        <dbReference type="Rhea" id="RHEA-COMP:9702"/>
        <dbReference type="ChEBI" id="CHEBI:30616"/>
        <dbReference type="ChEBI" id="CHEBI:33019"/>
        <dbReference type="ChEBI" id="CHEBI:60039"/>
        <dbReference type="ChEBI" id="CHEBI:78442"/>
        <dbReference type="ChEBI" id="CHEBI:78532"/>
        <dbReference type="ChEBI" id="CHEBI:456215"/>
        <dbReference type="EC" id="6.1.1.15"/>
    </reaction>
</comment>
<comment type="subunit">
    <text evidence="1">Homodimer.</text>
</comment>
<comment type="subcellular location">
    <subcellularLocation>
        <location evidence="1">Cytoplasm</location>
    </subcellularLocation>
</comment>
<comment type="domain">
    <text evidence="1">Consists of three domains: the N-terminal catalytic domain, the editing domain and the C-terminal anticodon-binding domain.</text>
</comment>
<comment type="similarity">
    <text evidence="1">Belongs to the class-II aminoacyl-tRNA synthetase family. ProS type 1 subfamily.</text>
</comment>
<protein>
    <recommendedName>
        <fullName evidence="1">Proline--tRNA ligase</fullName>
        <ecNumber evidence="1">6.1.1.15</ecNumber>
    </recommendedName>
    <alternativeName>
        <fullName evidence="1">Prolyl-tRNA synthetase</fullName>
        <shortName evidence="1">ProRS</shortName>
    </alternativeName>
</protein>
<reference key="1">
    <citation type="journal article" date="2004" name="Proc. Natl. Acad. Sci. U.S.A.">
        <title>The genome sequence of the probiotic intestinal bacterium Lactobacillus johnsonii NCC 533.</title>
        <authorList>
            <person name="Pridmore R.D."/>
            <person name="Berger B."/>
            <person name="Desiere F."/>
            <person name="Vilanova D."/>
            <person name="Barretto C."/>
            <person name="Pittet A.-C."/>
            <person name="Zwahlen M.-C."/>
            <person name="Rouvet M."/>
            <person name="Altermann E."/>
            <person name="Barrangou R."/>
            <person name="Mollet B."/>
            <person name="Mercenier A."/>
            <person name="Klaenhammer T."/>
            <person name="Arigoni F."/>
            <person name="Schell M.A."/>
        </authorList>
    </citation>
    <scope>NUCLEOTIDE SEQUENCE [LARGE SCALE GENOMIC DNA]</scope>
    <source>
        <strain>CNCM I-1225 / La1 / NCC 533</strain>
    </source>
</reference>
<evidence type="ECO:0000255" key="1">
    <source>
        <dbReference type="HAMAP-Rule" id="MF_01569"/>
    </source>
</evidence>
<proteinExistence type="inferred from homology"/>
<organism>
    <name type="scientific">Lactobacillus johnsonii (strain CNCM I-12250 / La1 / NCC 533)</name>
    <dbReference type="NCBI Taxonomy" id="257314"/>
    <lineage>
        <taxon>Bacteria</taxon>
        <taxon>Bacillati</taxon>
        <taxon>Bacillota</taxon>
        <taxon>Bacilli</taxon>
        <taxon>Lactobacillales</taxon>
        <taxon>Lactobacillaceae</taxon>
        <taxon>Lactobacillus</taxon>
    </lineage>
</organism>
<dbReference type="EC" id="6.1.1.15" evidence="1"/>
<dbReference type="EMBL" id="AE017198">
    <property type="protein sequence ID" value="AAS09261.1"/>
    <property type="molecule type" value="Genomic_DNA"/>
</dbReference>
<dbReference type="RefSeq" id="WP_011162239.1">
    <property type="nucleotide sequence ID" value="NC_005362.1"/>
</dbReference>
<dbReference type="SMR" id="Q74IS2"/>
<dbReference type="KEGG" id="ljo:LJ_1493"/>
<dbReference type="eggNOG" id="COG0442">
    <property type="taxonomic scope" value="Bacteria"/>
</dbReference>
<dbReference type="HOGENOM" id="CLU_016739_0_0_9"/>
<dbReference type="Proteomes" id="UP000000581">
    <property type="component" value="Chromosome"/>
</dbReference>
<dbReference type="GO" id="GO:0005829">
    <property type="term" value="C:cytosol"/>
    <property type="evidence" value="ECO:0007669"/>
    <property type="project" value="TreeGrafter"/>
</dbReference>
<dbReference type="GO" id="GO:0002161">
    <property type="term" value="F:aminoacyl-tRNA deacylase activity"/>
    <property type="evidence" value="ECO:0007669"/>
    <property type="project" value="InterPro"/>
</dbReference>
<dbReference type="GO" id="GO:0005524">
    <property type="term" value="F:ATP binding"/>
    <property type="evidence" value="ECO:0007669"/>
    <property type="project" value="UniProtKB-UniRule"/>
</dbReference>
<dbReference type="GO" id="GO:0140096">
    <property type="term" value="F:catalytic activity, acting on a protein"/>
    <property type="evidence" value="ECO:0007669"/>
    <property type="project" value="UniProtKB-ARBA"/>
</dbReference>
<dbReference type="GO" id="GO:0004827">
    <property type="term" value="F:proline-tRNA ligase activity"/>
    <property type="evidence" value="ECO:0007669"/>
    <property type="project" value="UniProtKB-UniRule"/>
</dbReference>
<dbReference type="GO" id="GO:0016740">
    <property type="term" value="F:transferase activity"/>
    <property type="evidence" value="ECO:0007669"/>
    <property type="project" value="UniProtKB-ARBA"/>
</dbReference>
<dbReference type="GO" id="GO:0006433">
    <property type="term" value="P:prolyl-tRNA aminoacylation"/>
    <property type="evidence" value="ECO:0007669"/>
    <property type="project" value="UniProtKB-UniRule"/>
</dbReference>
<dbReference type="CDD" id="cd04334">
    <property type="entry name" value="ProRS-INS"/>
    <property type="match status" value="1"/>
</dbReference>
<dbReference type="CDD" id="cd00861">
    <property type="entry name" value="ProRS_anticodon_short"/>
    <property type="match status" value="1"/>
</dbReference>
<dbReference type="CDD" id="cd00779">
    <property type="entry name" value="ProRS_core_prok"/>
    <property type="match status" value="1"/>
</dbReference>
<dbReference type="FunFam" id="3.40.50.800:FF:000011">
    <property type="entry name" value="Proline--tRNA ligase"/>
    <property type="match status" value="1"/>
</dbReference>
<dbReference type="Gene3D" id="3.40.50.800">
    <property type="entry name" value="Anticodon-binding domain"/>
    <property type="match status" value="1"/>
</dbReference>
<dbReference type="Gene3D" id="3.30.930.10">
    <property type="entry name" value="Bira Bifunctional Protein, Domain 2"/>
    <property type="match status" value="2"/>
</dbReference>
<dbReference type="Gene3D" id="3.90.960.10">
    <property type="entry name" value="YbaK/aminoacyl-tRNA synthetase-associated domain"/>
    <property type="match status" value="1"/>
</dbReference>
<dbReference type="HAMAP" id="MF_01569">
    <property type="entry name" value="Pro_tRNA_synth_type1"/>
    <property type="match status" value="1"/>
</dbReference>
<dbReference type="InterPro" id="IPR002314">
    <property type="entry name" value="aa-tRNA-synt_IIb"/>
</dbReference>
<dbReference type="InterPro" id="IPR006195">
    <property type="entry name" value="aa-tRNA-synth_II"/>
</dbReference>
<dbReference type="InterPro" id="IPR045864">
    <property type="entry name" value="aa-tRNA-synth_II/BPL/LPL"/>
</dbReference>
<dbReference type="InterPro" id="IPR004154">
    <property type="entry name" value="Anticodon-bd"/>
</dbReference>
<dbReference type="InterPro" id="IPR036621">
    <property type="entry name" value="Anticodon-bd_dom_sf"/>
</dbReference>
<dbReference type="InterPro" id="IPR002316">
    <property type="entry name" value="Pro-tRNA-ligase_IIa"/>
</dbReference>
<dbReference type="InterPro" id="IPR004500">
    <property type="entry name" value="Pro-tRNA-synth_IIa_bac-type"/>
</dbReference>
<dbReference type="InterPro" id="IPR023717">
    <property type="entry name" value="Pro-tRNA-Synthase_IIa_type1"/>
</dbReference>
<dbReference type="InterPro" id="IPR050062">
    <property type="entry name" value="Pro-tRNA_synthetase"/>
</dbReference>
<dbReference type="InterPro" id="IPR044140">
    <property type="entry name" value="ProRS_anticodon_short"/>
</dbReference>
<dbReference type="InterPro" id="IPR033730">
    <property type="entry name" value="ProRS_core_prok"/>
</dbReference>
<dbReference type="InterPro" id="IPR036754">
    <property type="entry name" value="YbaK/aa-tRNA-synt-asso_dom_sf"/>
</dbReference>
<dbReference type="InterPro" id="IPR007214">
    <property type="entry name" value="YbaK/aa-tRNA-synth-assoc-dom"/>
</dbReference>
<dbReference type="NCBIfam" id="NF006625">
    <property type="entry name" value="PRK09194.1"/>
    <property type="match status" value="1"/>
</dbReference>
<dbReference type="NCBIfam" id="TIGR00409">
    <property type="entry name" value="proS_fam_II"/>
    <property type="match status" value="1"/>
</dbReference>
<dbReference type="PANTHER" id="PTHR42753">
    <property type="entry name" value="MITOCHONDRIAL RIBOSOME PROTEIN L39/PROLYL-TRNA LIGASE FAMILY MEMBER"/>
    <property type="match status" value="1"/>
</dbReference>
<dbReference type="PANTHER" id="PTHR42753:SF2">
    <property type="entry name" value="PROLINE--TRNA LIGASE"/>
    <property type="match status" value="1"/>
</dbReference>
<dbReference type="Pfam" id="PF03129">
    <property type="entry name" value="HGTP_anticodon"/>
    <property type="match status" value="1"/>
</dbReference>
<dbReference type="Pfam" id="PF00587">
    <property type="entry name" value="tRNA-synt_2b"/>
    <property type="match status" value="1"/>
</dbReference>
<dbReference type="Pfam" id="PF04073">
    <property type="entry name" value="tRNA_edit"/>
    <property type="match status" value="1"/>
</dbReference>
<dbReference type="PRINTS" id="PR01046">
    <property type="entry name" value="TRNASYNTHPRO"/>
</dbReference>
<dbReference type="SUPFAM" id="SSF52954">
    <property type="entry name" value="Class II aaRS ABD-related"/>
    <property type="match status" value="1"/>
</dbReference>
<dbReference type="SUPFAM" id="SSF55681">
    <property type="entry name" value="Class II aaRS and biotin synthetases"/>
    <property type="match status" value="1"/>
</dbReference>
<dbReference type="SUPFAM" id="SSF55826">
    <property type="entry name" value="YbaK/ProRS associated domain"/>
    <property type="match status" value="1"/>
</dbReference>
<dbReference type="PROSITE" id="PS50862">
    <property type="entry name" value="AA_TRNA_LIGASE_II"/>
    <property type="match status" value="1"/>
</dbReference>
<sequence>MRQSKFFMPTLKEAPSDAVAKSHQLMLRGGYIRQVTAGVYAYLPLGYRVLRKAENIIEEEMDNINVPEMIMPHLLPATLWQESGRYKKYGAEMFKLQDRHGRESLLGPTHEETFTEIVAKNLKSYKQMPLALYQIQTKFRDENRPRFGLLRGREFVMLDGYSFAATREQLDEQFDDQKSAYLKIFNRAGVTVHPVIADSGTMGGKNSTEFQAPAAIGEDTIATNEKGTYAANLEMAKSIDTFKQEPEEAKDLAKVATPGMDTIEKLADFLKVPSTRIVKSILYIADDQKVLVLIRGDKEINEVKLGHILDADEVRTANADELVEITGSEKGGVGPINADWADKIIADETVKDLYNVVVGANETDYQYQNANLDRDFKVDEFADIRTANEGEPDPVDHLPLKFTTSIEVGHIFKLGTYYTDTMGADFLDNNGKAKPVIMGSYGIGVTRMLSAAVEQHLTENGIAWPKEIAPFAIHLIQMKMKDETQTKLAEKLEKELSAKYDVLYDDRNERPGVKFNDADLVGAPLRITIGRKAKDGIVEVKRPMDEKATEVNISDLDAVITKELG</sequence>
<gene>
    <name evidence="1" type="primary">proS</name>
    <name type="ordered locus">LJ_1493</name>
</gene>
<name>SYP_LACJO</name>
<feature type="chain" id="PRO_0000248706" description="Proline--tRNA ligase">
    <location>
        <begin position="1"/>
        <end position="565"/>
    </location>
</feature>
<accession>Q74IS2</accession>